<name>RS15_SALG2</name>
<gene>
    <name evidence="1" type="primary">rpsO</name>
    <name type="ordered locus">SG3174</name>
</gene>
<comment type="function">
    <text evidence="1">One of the primary rRNA binding proteins, it binds directly to 16S rRNA where it helps nucleate assembly of the platform of the 30S subunit by binding and bridging several RNA helices of the 16S rRNA.</text>
</comment>
<comment type="function">
    <text evidence="1">Forms an intersubunit bridge (bridge B4) with the 23S rRNA of the 50S subunit in the ribosome.</text>
</comment>
<comment type="subunit">
    <text evidence="1">Part of the 30S ribosomal subunit. Forms a bridge to the 50S subunit in the 70S ribosome, contacting the 23S rRNA.</text>
</comment>
<comment type="similarity">
    <text evidence="1">Belongs to the universal ribosomal protein uS15 family.</text>
</comment>
<keyword id="KW-0687">Ribonucleoprotein</keyword>
<keyword id="KW-0689">Ribosomal protein</keyword>
<keyword id="KW-0694">RNA-binding</keyword>
<keyword id="KW-0699">rRNA-binding</keyword>
<feature type="chain" id="PRO_1000143165" description="Small ribosomal subunit protein uS15">
    <location>
        <begin position="1"/>
        <end position="89"/>
    </location>
</feature>
<protein>
    <recommendedName>
        <fullName evidence="1">Small ribosomal subunit protein uS15</fullName>
    </recommendedName>
    <alternativeName>
        <fullName evidence="2">30S ribosomal protein S15</fullName>
    </alternativeName>
</protein>
<reference key="1">
    <citation type="journal article" date="2008" name="Genome Res.">
        <title>Comparative genome analysis of Salmonella enteritidis PT4 and Salmonella gallinarum 287/91 provides insights into evolutionary and host adaptation pathways.</title>
        <authorList>
            <person name="Thomson N.R."/>
            <person name="Clayton D.J."/>
            <person name="Windhorst D."/>
            <person name="Vernikos G."/>
            <person name="Davidson S."/>
            <person name="Churcher C."/>
            <person name="Quail M.A."/>
            <person name="Stevens M."/>
            <person name="Jones M.A."/>
            <person name="Watson M."/>
            <person name="Barron A."/>
            <person name="Layton A."/>
            <person name="Pickard D."/>
            <person name="Kingsley R.A."/>
            <person name="Bignell A."/>
            <person name="Clark L."/>
            <person name="Harris B."/>
            <person name="Ormond D."/>
            <person name="Abdellah Z."/>
            <person name="Brooks K."/>
            <person name="Cherevach I."/>
            <person name="Chillingworth T."/>
            <person name="Woodward J."/>
            <person name="Norberczak H."/>
            <person name="Lord A."/>
            <person name="Arrowsmith C."/>
            <person name="Jagels K."/>
            <person name="Moule S."/>
            <person name="Mungall K."/>
            <person name="Saunders M."/>
            <person name="Whitehead S."/>
            <person name="Chabalgoity J.A."/>
            <person name="Maskell D."/>
            <person name="Humphreys T."/>
            <person name="Roberts M."/>
            <person name="Barrow P.A."/>
            <person name="Dougan G."/>
            <person name="Parkhill J."/>
        </authorList>
    </citation>
    <scope>NUCLEOTIDE SEQUENCE [LARGE SCALE GENOMIC DNA]</scope>
    <source>
        <strain>287/91 / NCTC 13346</strain>
    </source>
</reference>
<dbReference type="EMBL" id="AM933173">
    <property type="protein sequence ID" value="CAR38973.1"/>
    <property type="molecule type" value="Genomic_DNA"/>
</dbReference>
<dbReference type="RefSeq" id="WP_000059465.1">
    <property type="nucleotide sequence ID" value="NC_011274.1"/>
</dbReference>
<dbReference type="SMR" id="B5REN3"/>
<dbReference type="GeneID" id="93035884"/>
<dbReference type="KEGG" id="seg:SG3174"/>
<dbReference type="HOGENOM" id="CLU_148518_0_0_6"/>
<dbReference type="Proteomes" id="UP000008321">
    <property type="component" value="Chromosome"/>
</dbReference>
<dbReference type="GO" id="GO:0022627">
    <property type="term" value="C:cytosolic small ribosomal subunit"/>
    <property type="evidence" value="ECO:0007669"/>
    <property type="project" value="TreeGrafter"/>
</dbReference>
<dbReference type="GO" id="GO:0019843">
    <property type="term" value="F:rRNA binding"/>
    <property type="evidence" value="ECO:0007669"/>
    <property type="project" value="UniProtKB-UniRule"/>
</dbReference>
<dbReference type="GO" id="GO:0003735">
    <property type="term" value="F:structural constituent of ribosome"/>
    <property type="evidence" value="ECO:0007669"/>
    <property type="project" value="InterPro"/>
</dbReference>
<dbReference type="GO" id="GO:0006412">
    <property type="term" value="P:translation"/>
    <property type="evidence" value="ECO:0007669"/>
    <property type="project" value="UniProtKB-UniRule"/>
</dbReference>
<dbReference type="CDD" id="cd00353">
    <property type="entry name" value="Ribosomal_S15p_S13e"/>
    <property type="match status" value="1"/>
</dbReference>
<dbReference type="FunFam" id="1.10.287.10:FF:000002">
    <property type="entry name" value="30S ribosomal protein S15"/>
    <property type="match status" value="1"/>
</dbReference>
<dbReference type="Gene3D" id="6.10.250.3130">
    <property type="match status" value="1"/>
</dbReference>
<dbReference type="Gene3D" id="1.10.287.10">
    <property type="entry name" value="S15/NS1, RNA-binding"/>
    <property type="match status" value="1"/>
</dbReference>
<dbReference type="HAMAP" id="MF_01343_B">
    <property type="entry name" value="Ribosomal_uS15_B"/>
    <property type="match status" value="1"/>
</dbReference>
<dbReference type="InterPro" id="IPR000589">
    <property type="entry name" value="Ribosomal_uS15"/>
</dbReference>
<dbReference type="InterPro" id="IPR005290">
    <property type="entry name" value="Ribosomal_uS15_bac-type"/>
</dbReference>
<dbReference type="InterPro" id="IPR009068">
    <property type="entry name" value="uS15_NS1_RNA-bd_sf"/>
</dbReference>
<dbReference type="NCBIfam" id="TIGR00952">
    <property type="entry name" value="S15_bact"/>
    <property type="match status" value="1"/>
</dbReference>
<dbReference type="PANTHER" id="PTHR23321">
    <property type="entry name" value="RIBOSOMAL PROTEIN S15, BACTERIAL AND ORGANELLAR"/>
    <property type="match status" value="1"/>
</dbReference>
<dbReference type="PANTHER" id="PTHR23321:SF26">
    <property type="entry name" value="SMALL RIBOSOMAL SUBUNIT PROTEIN US15M"/>
    <property type="match status" value="1"/>
</dbReference>
<dbReference type="Pfam" id="PF00312">
    <property type="entry name" value="Ribosomal_S15"/>
    <property type="match status" value="1"/>
</dbReference>
<dbReference type="SMART" id="SM01387">
    <property type="entry name" value="Ribosomal_S15"/>
    <property type="match status" value="1"/>
</dbReference>
<dbReference type="SUPFAM" id="SSF47060">
    <property type="entry name" value="S15/NS1 RNA-binding domain"/>
    <property type="match status" value="1"/>
</dbReference>
<dbReference type="PROSITE" id="PS00362">
    <property type="entry name" value="RIBOSOMAL_S15"/>
    <property type="match status" value="1"/>
</dbReference>
<organism>
    <name type="scientific">Salmonella gallinarum (strain 287/91 / NCTC 13346)</name>
    <dbReference type="NCBI Taxonomy" id="550538"/>
    <lineage>
        <taxon>Bacteria</taxon>
        <taxon>Pseudomonadati</taxon>
        <taxon>Pseudomonadota</taxon>
        <taxon>Gammaproteobacteria</taxon>
        <taxon>Enterobacterales</taxon>
        <taxon>Enterobacteriaceae</taxon>
        <taxon>Salmonella</taxon>
    </lineage>
</organism>
<proteinExistence type="inferred from homology"/>
<accession>B5REN3</accession>
<evidence type="ECO:0000255" key="1">
    <source>
        <dbReference type="HAMAP-Rule" id="MF_01343"/>
    </source>
</evidence>
<evidence type="ECO:0000305" key="2"/>
<sequence length="89" mass="10198">MSLSTEATAKIVSEFGRDANDTGSTDVQVALLTAQINHLQGHFAEHKKDHHSRRGLLRMVSQRRKLLDYLKRKDVARYTALIERLGLRR</sequence>